<sequence>MSHKACYTNPGAGVKRPRNDTGNKLTVVLGAQWGDEGKGKVVDLLATESDIICRCQGGNNAGHTVVVDGKEYDFHLLPSGIINSKALSVIGNGVVIHLPGLFEEAEKNEKNGLKDWEKRLIISDRAHIVFDFHQAVDGLQEVQRQAQEGKNIGTTKKGIGPTYSSKASRTGLRICDLLADFKDFSMRFKNLAQQYQAMFPTLEVDVDGQLKKLKEYAERIRPMVRDGVYFMYDAINGPPKKILVEGANAALLDIDFGTYPFVTSSNCTVGGVCTGLGIPPLNIGDVYGVVKAYTTRVGIGAFPTEQLNEVGELLQTRGHEVGVTTGRKRRCGWLDLVILRYANMINGFTAFALTKLDILDVMDEIKVGVSYKLNGKKIPYFPANMDVLQKVEVEYEKLPGWKSDTSACRKWEDLPVKAQNYIRFVEIHVGVPIKWVGVGKARESMIQMF</sequence>
<protein>
    <recommendedName>
        <fullName evidence="2">Adenylosuccinate synthetase isozyme 1 B</fullName>
        <shortName evidence="2">AMPSase 1 B</shortName>
        <shortName evidence="2">AdSS 1 B</shortName>
        <ecNumber evidence="2">6.3.4.4</ecNumber>
    </recommendedName>
    <alternativeName>
        <fullName evidence="2">Adenylosuccinate synthetase, basic isozyme B</fullName>
    </alternativeName>
    <alternativeName>
        <fullName evidence="2">Adenylosuccinate synthetase, muscle isozyme B</fullName>
        <shortName evidence="2">M-type adenylosuccinate synthetase B</shortName>
    </alternativeName>
    <alternativeName>
        <fullName evidence="2">IMP--aspartate ligase 1 B</fullName>
    </alternativeName>
</protein>
<accession>B5DGM3</accession>
<dbReference type="EC" id="6.3.4.4" evidence="2"/>
<dbReference type="EMBL" id="BT043782">
    <property type="protein sequence ID" value="ACH70897.1"/>
    <property type="molecule type" value="mRNA"/>
</dbReference>
<dbReference type="RefSeq" id="NP_001133177.1">
    <property type="nucleotide sequence ID" value="NM_001139705.1"/>
</dbReference>
<dbReference type="SMR" id="B5DGM3"/>
<dbReference type="STRING" id="8030.ENSSSAP00000006372"/>
<dbReference type="PaxDb" id="8030-ENSSSAP00000006372"/>
<dbReference type="GeneID" id="100194620"/>
<dbReference type="KEGG" id="sasa:100194620"/>
<dbReference type="CTD" id="100194620"/>
<dbReference type="OrthoDB" id="113485at7898"/>
<dbReference type="UniPathway" id="UPA00075">
    <property type="reaction ID" value="UER00335"/>
</dbReference>
<dbReference type="Proteomes" id="UP000087266">
    <property type="component" value="Chromosome ssa06"/>
</dbReference>
<dbReference type="Bgee" id="ENSSSAG00000003104">
    <property type="expression patterns" value="Expressed in muscle tissue and 21 other cell types or tissues"/>
</dbReference>
<dbReference type="GO" id="GO:0005737">
    <property type="term" value="C:cytoplasm"/>
    <property type="evidence" value="ECO:0007669"/>
    <property type="project" value="UniProtKB-SubCell"/>
</dbReference>
<dbReference type="GO" id="GO:0004019">
    <property type="term" value="F:adenylosuccinate synthase activity"/>
    <property type="evidence" value="ECO:0007669"/>
    <property type="project" value="UniProtKB-UniRule"/>
</dbReference>
<dbReference type="GO" id="GO:0005525">
    <property type="term" value="F:GTP binding"/>
    <property type="evidence" value="ECO:0007669"/>
    <property type="project" value="UniProtKB-UniRule"/>
</dbReference>
<dbReference type="GO" id="GO:0000287">
    <property type="term" value="F:magnesium ion binding"/>
    <property type="evidence" value="ECO:0007669"/>
    <property type="project" value="UniProtKB-UniRule"/>
</dbReference>
<dbReference type="GO" id="GO:0044208">
    <property type="term" value="P:'de novo' AMP biosynthetic process"/>
    <property type="evidence" value="ECO:0007669"/>
    <property type="project" value="UniProtKB-UniRule"/>
</dbReference>
<dbReference type="GO" id="GO:0046040">
    <property type="term" value="P:IMP metabolic process"/>
    <property type="evidence" value="ECO:0007669"/>
    <property type="project" value="TreeGrafter"/>
</dbReference>
<dbReference type="CDD" id="cd03108">
    <property type="entry name" value="AdSS"/>
    <property type="match status" value="1"/>
</dbReference>
<dbReference type="FunFam" id="3.90.170.10:FF:000001">
    <property type="entry name" value="Adenylosuccinate synthetase"/>
    <property type="match status" value="1"/>
</dbReference>
<dbReference type="FunFam" id="1.10.300.10:FF:000002">
    <property type="entry name" value="Adenylosuccinate synthetase, chloroplastic"/>
    <property type="match status" value="1"/>
</dbReference>
<dbReference type="Gene3D" id="3.40.440.10">
    <property type="entry name" value="Adenylosuccinate Synthetase, subunit A, domain 1"/>
    <property type="match status" value="1"/>
</dbReference>
<dbReference type="Gene3D" id="1.10.300.10">
    <property type="entry name" value="Adenylosuccinate Synthetase, subunit A, domain 2"/>
    <property type="match status" value="1"/>
</dbReference>
<dbReference type="Gene3D" id="3.90.170.10">
    <property type="entry name" value="Adenylosuccinate Synthetase, subunit A, domain 3"/>
    <property type="match status" value="1"/>
</dbReference>
<dbReference type="HAMAP" id="MF_00011">
    <property type="entry name" value="Adenylosucc_synth"/>
    <property type="match status" value="1"/>
</dbReference>
<dbReference type="HAMAP" id="MF_03126">
    <property type="entry name" value="Adenylosucc_synth_vert_basic"/>
    <property type="match status" value="1"/>
</dbReference>
<dbReference type="InterPro" id="IPR018220">
    <property type="entry name" value="Adenylosuccin_syn_GTP-bd"/>
</dbReference>
<dbReference type="InterPro" id="IPR033128">
    <property type="entry name" value="Adenylosuccin_syn_Lys_AS"/>
</dbReference>
<dbReference type="InterPro" id="IPR042109">
    <property type="entry name" value="Adenylosuccinate_synth_dom1"/>
</dbReference>
<dbReference type="InterPro" id="IPR042110">
    <property type="entry name" value="Adenylosuccinate_synth_dom2"/>
</dbReference>
<dbReference type="InterPro" id="IPR042111">
    <property type="entry name" value="Adenylosuccinate_synth_dom3"/>
</dbReference>
<dbReference type="InterPro" id="IPR001114">
    <property type="entry name" value="Adenylosuccinate_synthetase"/>
</dbReference>
<dbReference type="InterPro" id="IPR027509">
    <property type="entry name" value="AdSS_1_vert"/>
</dbReference>
<dbReference type="InterPro" id="IPR027417">
    <property type="entry name" value="P-loop_NTPase"/>
</dbReference>
<dbReference type="NCBIfam" id="NF002223">
    <property type="entry name" value="PRK01117.1"/>
    <property type="match status" value="1"/>
</dbReference>
<dbReference type="NCBIfam" id="TIGR00184">
    <property type="entry name" value="purA"/>
    <property type="match status" value="1"/>
</dbReference>
<dbReference type="PANTHER" id="PTHR11846">
    <property type="entry name" value="ADENYLOSUCCINATE SYNTHETASE"/>
    <property type="match status" value="1"/>
</dbReference>
<dbReference type="PANTHER" id="PTHR11846:SF2">
    <property type="entry name" value="ADENYLOSUCCINATE SYNTHETASE ISOZYME 1"/>
    <property type="match status" value="1"/>
</dbReference>
<dbReference type="Pfam" id="PF00709">
    <property type="entry name" value="Adenylsucc_synt"/>
    <property type="match status" value="1"/>
</dbReference>
<dbReference type="SMART" id="SM00788">
    <property type="entry name" value="Adenylsucc_synt"/>
    <property type="match status" value="1"/>
</dbReference>
<dbReference type="SUPFAM" id="SSF52540">
    <property type="entry name" value="P-loop containing nucleoside triphosphate hydrolases"/>
    <property type="match status" value="1"/>
</dbReference>
<dbReference type="PROSITE" id="PS01266">
    <property type="entry name" value="ADENYLOSUCCIN_SYN_1"/>
    <property type="match status" value="1"/>
</dbReference>
<dbReference type="PROSITE" id="PS00513">
    <property type="entry name" value="ADENYLOSUCCIN_SYN_2"/>
    <property type="match status" value="1"/>
</dbReference>
<feature type="chain" id="PRO_0000398889" description="Adenylosuccinate synthetase isozyme 1 B">
    <location>
        <begin position="1"/>
        <end position="449"/>
    </location>
</feature>
<feature type="active site" description="Proton acceptor" evidence="2">
    <location>
        <position position="35"/>
    </location>
</feature>
<feature type="active site" description="Proton donor" evidence="2">
    <location>
        <position position="63"/>
    </location>
</feature>
<feature type="binding site" evidence="2">
    <location>
        <begin position="34"/>
        <end position="40"/>
    </location>
    <ligand>
        <name>GTP</name>
        <dbReference type="ChEBI" id="CHEBI:37565"/>
    </ligand>
</feature>
<feature type="binding site" description="in other chain" evidence="2">
    <location>
        <begin position="35"/>
        <end position="38"/>
    </location>
    <ligand>
        <name>IMP</name>
        <dbReference type="ChEBI" id="CHEBI:58053"/>
        <note>ligand shared between dimeric partners</note>
    </ligand>
</feature>
<feature type="binding site" evidence="2">
    <location>
        <position position="35"/>
    </location>
    <ligand>
        <name>Mg(2+)</name>
        <dbReference type="ChEBI" id="CHEBI:18420"/>
    </ligand>
</feature>
<feature type="binding site" evidence="2">
    <location>
        <position position="35"/>
    </location>
    <ligand>
        <name>substrate</name>
    </ligand>
</feature>
<feature type="binding site" description="in other chain" evidence="2">
    <location>
        <begin position="60"/>
        <end position="63"/>
    </location>
    <ligand>
        <name>IMP</name>
        <dbReference type="ChEBI" id="CHEBI:58053"/>
        <note>ligand shared between dimeric partners</note>
    </ligand>
</feature>
<feature type="binding site" evidence="2">
    <location>
        <begin position="62"/>
        <end position="64"/>
    </location>
    <ligand>
        <name>GTP</name>
        <dbReference type="ChEBI" id="CHEBI:37565"/>
    </ligand>
</feature>
<feature type="binding site" evidence="2">
    <location>
        <position position="62"/>
    </location>
    <ligand>
        <name>Mg(2+)</name>
        <dbReference type="ChEBI" id="CHEBI:18420"/>
    </ligand>
</feature>
<feature type="binding site" description="in other chain" evidence="2">
    <location>
        <position position="155"/>
    </location>
    <ligand>
        <name>IMP</name>
        <dbReference type="ChEBI" id="CHEBI:58053"/>
        <note>ligand shared between dimeric partners</note>
    </ligand>
</feature>
<feature type="binding site" evidence="2">
    <location>
        <position position="169"/>
    </location>
    <ligand>
        <name>IMP</name>
        <dbReference type="ChEBI" id="CHEBI:58053"/>
        <note>ligand shared between dimeric partners</note>
    </ligand>
</feature>
<feature type="binding site" description="in other chain" evidence="2">
    <location>
        <position position="248"/>
    </location>
    <ligand>
        <name>IMP</name>
        <dbReference type="ChEBI" id="CHEBI:58053"/>
        <note>ligand shared between dimeric partners</note>
    </ligand>
</feature>
<feature type="binding site" description="in other chain" evidence="2">
    <location>
        <position position="263"/>
    </location>
    <ligand>
        <name>IMP</name>
        <dbReference type="ChEBI" id="CHEBI:58053"/>
        <note>ligand shared between dimeric partners</note>
    </ligand>
</feature>
<feature type="binding site" evidence="2">
    <location>
        <begin position="323"/>
        <end position="329"/>
    </location>
    <ligand>
        <name>substrate</name>
    </ligand>
</feature>
<feature type="binding site" description="in other chain" evidence="2">
    <location>
        <position position="327"/>
    </location>
    <ligand>
        <name>IMP</name>
        <dbReference type="ChEBI" id="CHEBI:58053"/>
        <note>ligand shared between dimeric partners</note>
    </ligand>
</feature>
<feature type="binding site" evidence="2">
    <location>
        <position position="329"/>
    </location>
    <ligand>
        <name>GTP</name>
        <dbReference type="ChEBI" id="CHEBI:37565"/>
    </ligand>
</feature>
<feature type="binding site" evidence="2">
    <location>
        <begin position="355"/>
        <end position="357"/>
    </location>
    <ligand>
        <name>GTP</name>
        <dbReference type="ChEBI" id="CHEBI:37565"/>
    </ligand>
</feature>
<feature type="binding site" evidence="2">
    <location>
        <begin position="437"/>
        <end position="440"/>
    </location>
    <ligand>
        <name>GTP</name>
        <dbReference type="ChEBI" id="CHEBI:37565"/>
    </ligand>
</feature>
<comment type="function">
    <text evidence="1">Component of the purine nucleotide cycle (PNC), which interconverts IMP and AMP to regulate the nucleotide levels in various tissues, and which contributes to glycolysis and ammoniagenesis. Catalyzes the first committed step in the biosynthesis of AMP from IMP (By similarity).</text>
</comment>
<comment type="catalytic activity">
    <reaction evidence="2">
        <text>IMP + L-aspartate + GTP = N(6)-(1,2-dicarboxyethyl)-AMP + GDP + phosphate + 2 H(+)</text>
        <dbReference type="Rhea" id="RHEA:15753"/>
        <dbReference type="ChEBI" id="CHEBI:15378"/>
        <dbReference type="ChEBI" id="CHEBI:29991"/>
        <dbReference type="ChEBI" id="CHEBI:37565"/>
        <dbReference type="ChEBI" id="CHEBI:43474"/>
        <dbReference type="ChEBI" id="CHEBI:57567"/>
        <dbReference type="ChEBI" id="CHEBI:58053"/>
        <dbReference type="ChEBI" id="CHEBI:58189"/>
        <dbReference type="EC" id="6.3.4.4"/>
    </reaction>
</comment>
<comment type="cofactor">
    <cofactor evidence="2">
        <name>Mg(2+)</name>
        <dbReference type="ChEBI" id="CHEBI:18420"/>
    </cofactor>
    <text evidence="2">Binds 1 Mg(2+) ion per subunit.</text>
</comment>
<comment type="pathway">
    <text evidence="2">Purine metabolism; AMP biosynthesis via de novo pathway; AMP from IMP: step 1/2.</text>
</comment>
<comment type="subunit">
    <text evidence="2">Homodimer.</text>
</comment>
<comment type="subcellular location">
    <subcellularLocation>
        <location evidence="2">Cytoplasm</location>
    </subcellularLocation>
</comment>
<comment type="similarity">
    <text evidence="2">Belongs to the adenylosuccinate synthetase family.</text>
</comment>
<gene>
    <name type="primary">adss1b</name>
    <name type="synonym">adssl1b</name>
</gene>
<organism>
    <name type="scientific">Salmo salar</name>
    <name type="common">Atlantic salmon</name>
    <dbReference type="NCBI Taxonomy" id="8030"/>
    <lineage>
        <taxon>Eukaryota</taxon>
        <taxon>Metazoa</taxon>
        <taxon>Chordata</taxon>
        <taxon>Craniata</taxon>
        <taxon>Vertebrata</taxon>
        <taxon>Euteleostomi</taxon>
        <taxon>Actinopterygii</taxon>
        <taxon>Neopterygii</taxon>
        <taxon>Teleostei</taxon>
        <taxon>Protacanthopterygii</taxon>
        <taxon>Salmoniformes</taxon>
        <taxon>Salmonidae</taxon>
        <taxon>Salmoninae</taxon>
        <taxon>Salmo</taxon>
    </lineage>
</organism>
<proteinExistence type="evidence at transcript level"/>
<reference key="1">
    <citation type="journal article" date="2009" name="BMC Genomics">
        <title>Characterization of full-length sequenced cDNA inserts (FLIcs) from Atlantic salmon (Salmo salar).</title>
        <authorList>
            <person name="Andreassen R."/>
            <person name="Lunner S."/>
            <person name="Hoyheim B."/>
        </authorList>
    </citation>
    <scope>NUCLEOTIDE SEQUENCE [LARGE SCALE MRNA]</scope>
    <source>
        <tissue>White muscle</tissue>
    </source>
</reference>
<keyword id="KW-0963">Cytoplasm</keyword>
<keyword id="KW-0342">GTP-binding</keyword>
<keyword id="KW-0436">Ligase</keyword>
<keyword id="KW-0460">Magnesium</keyword>
<keyword id="KW-0479">Metal-binding</keyword>
<keyword id="KW-0547">Nucleotide-binding</keyword>
<keyword id="KW-0658">Purine biosynthesis</keyword>
<keyword id="KW-1185">Reference proteome</keyword>
<name>PUA1B_SALSA</name>
<evidence type="ECO:0000250" key="1"/>
<evidence type="ECO:0000255" key="2">
    <source>
        <dbReference type="HAMAP-Rule" id="MF_03126"/>
    </source>
</evidence>